<keyword id="KW-0285">Flavoprotein</keyword>
<keyword id="KW-0288">FMN</keyword>
<keyword id="KW-0521">NADP</keyword>
<keyword id="KW-0560">Oxidoreductase</keyword>
<keyword id="KW-1185">Reference proteome</keyword>
<sequence>MNEAVSPGALSTLFTDARTHNGWRETPVSDETLREIYALMKWGPTSANCSPARIVFTRTAEGKERLRPALSSGNLQKTLTAPVTAIVAWDSEFYERLPLLFPHGDARSWFTSSPQLAEETAFRNSSMQAAYLIVACRALGLDTGPMSGFDRQHVDDAFFTGSTLKSNLLINIGYGDSSKLYARLPRLSFEEACGLL</sequence>
<reference key="1">
    <citation type="journal article" date="1996" name="DNA Res.">
        <title>A 718-kb DNA sequence of the Escherichia coli K-12 genome corresponding to the 12.7-28.0 min region on the linkage map.</title>
        <authorList>
            <person name="Oshima T."/>
            <person name="Aiba H."/>
            <person name="Baba T."/>
            <person name="Fujita K."/>
            <person name="Hayashi K."/>
            <person name="Honjo A."/>
            <person name="Ikemoto K."/>
            <person name="Inada T."/>
            <person name="Itoh T."/>
            <person name="Kajihara M."/>
            <person name="Kanai K."/>
            <person name="Kashimoto K."/>
            <person name="Kimura S."/>
            <person name="Kitagawa M."/>
            <person name="Makino K."/>
            <person name="Masuda S."/>
            <person name="Miki T."/>
            <person name="Mizobuchi K."/>
            <person name="Mori H."/>
            <person name="Motomura K."/>
            <person name="Nakamura Y."/>
            <person name="Nashimoto H."/>
            <person name="Nishio Y."/>
            <person name="Saito N."/>
            <person name="Sampei G."/>
            <person name="Seki Y."/>
            <person name="Tagami H."/>
            <person name="Takemoto K."/>
            <person name="Wada C."/>
            <person name="Yamamoto Y."/>
            <person name="Yano M."/>
            <person name="Horiuchi T."/>
        </authorList>
    </citation>
    <scope>NUCLEOTIDE SEQUENCE [LARGE SCALE GENOMIC DNA]</scope>
    <source>
        <strain>K12 / W3110 / ATCC 27325 / DSM 5911</strain>
    </source>
</reference>
<reference key="2">
    <citation type="journal article" date="1997" name="Science">
        <title>The complete genome sequence of Escherichia coli K-12.</title>
        <authorList>
            <person name="Blattner F.R."/>
            <person name="Plunkett G. III"/>
            <person name="Bloch C.A."/>
            <person name="Perna N.T."/>
            <person name="Burland V."/>
            <person name="Riley M."/>
            <person name="Collado-Vides J."/>
            <person name="Glasner J.D."/>
            <person name="Rode C.K."/>
            <person name="Mayhew G.F."/>
            <person name="Gregor J."/>
            <person name="Davis N.W."/>
            <person name="Kirkpatrick H.A."/>
            <person name="Goeden M.A."/>
            <person name="Rose D.J."/>
            <person name="Mau B."/>
            <person name="Shao Y."/>
        </authorList>
    </citation>
    <scope>NUCLEOTIDE SEQUENCE [LARGE SCALE GENOMIC DNA]</scope>
    <source>
        <strain>K12 / MG1655 / ATCC 47076</strain>
    </source>
</reference>
<reference key="3">
    <citation type="journal article" date="2006" name="Mol. Syst. Biol.">
        <title>Highly accurate genome sequences of Escherichia coli K-12 strains MG1655 and W3110.</title>
        <authorList>
            <person name="Hayashi K."/>
            <person name="Morooka N."/>
            <person name="Yamamoto Y."/>
            <person name="Fujita K."/>
            <person name="Isono K."/>
            <person name="Choi S."/>
            <person name="Ohtsubo E."/>
            <person name="Baba T."/>
            <person name="Wanner B.L."/>
            <person name="Mori H."/>
            <person name="Horiuchi T."/>
        </authorList>
    </citation>
    <scope>NUCLEOTIDE SEQUENCE [LARGE SCALE GENOMIC DNA]</scope>
    <source>
        <strain>K12 / W3110 / ATCC 27325 / DSM 5911</strain>
    </source>
</reference>
<reference key="4">
    <citation type="journal article" date="2000" name="Proc. Natl. Acad. Sci. U.S.A.">
        <title>Nitrogen regulatory protein C-controlled genes of Escherichia coli: scavenging as a defense against nitrogen limitation.</title>
        <authorList>
            <person name="Zimmer D.P."/>
            <person name="Soupene E."/>
            <person name="Lee H.L."/>
            <person name="Wendisch V.F."/>
            <person name="Khodursky A.B."/>
            <person name="Peter B.J."/>
            <person name="Bender R.A."/>
            <person name="Kustu S."/>
        </authorList>
    </citation>
    <scope>INDUCTION</scope>
</reference>
<reference key="5">
    <citation type="journal article" date="2006" name="Proc. Natl. Acad. Sci. U.S.A.">
        <title>A previously undescribed pathway for pyrimidine catabolism.</title>
        <authorList>
            <person name="Loh K.D."/>
            <person name="Gyaneshwar P."/>
            <person name="Markenscoff Papadimitriou E."/>
            <person name="Fong R."/>
            <person name="Kim K.-S."/>
            <person name="Parales R."/>
            <person name="Zhou Z."/>
            <person name="Inwood W."/>
            <person name="Kustu S."/>
        </authorList>
    </citation>
    <scope>FUNCTION IN PYRIMIDINE CATABOLISM</scope>
    <scope>DISRUPTION PHENOTYPE</scope>
    <scope>NOMENCLATURE</scope>
    <source>
        <strain>K12 / MG1655 / ATCC 47076</strain>
    </source>
</reference>
<reference key="6">
    <citation type="journal article" date="2007" name="Mol. Microbiol.">
        <title>RutR is the uracil/thymine-sensing master regulator of a set of genes for synthesis and degradation of pyrimidines.</title>
        <authorList>
            <person name="Shimada T."/>
            <person name="Hirao K."/>
            <person name="Kori A."/>
            <person name="Yamamoto K."/>
            <person name="Ishihama A."/>
        </authorList>
    </citation>
    <scope>INDUCTION</scope>
</reference>
<reference key="7">
    <citation type="journal article" date="2010" name="J. Bacteriol.">
        <title>The Rut pathway for pyrimidine degradation: novel chemistry and toxicity problems.</title>
        <authorList>
            <person name="Kim K.S."/>
            <person name="Pelton J.G."/>
            <person name="Inwood W.B."/>
            <person name="Andersen U."/>
            <person name="Kustu S."/>
            <person name="Wemmer D.E."/>
        </authorList>
    </citation>
    <scope>DISRUPTION PHENOTYPE</scope>
</reference>
<protein>
    <recommendedName>
        <fullName>Probable malonic semialdehyde reductase RutE</fullName>
        <ecNumber>1.1.1.298</ecNumber>
    </recommendedName>
</protein>
<proteinExistence type="evidence at protein level"/>
<evidence type="ECO:0000269" key="1">
    <source>
    </source>
</evidence>
<evidence type="ECO:0000269" key="2">
    <source>
    </source>
</evidence>
<evidence type="ECO:0000269" key="3">
    <source>
    </source>
</evidence>
<evidence type="ECO:0000269" key="4">
    <source>
    </source>
</evidence>
<evidence type="ECO:0000305" key="5"/>
<feature type="chain" id="PRO_0000072729" description="Probable malonic semialdehyde reductase RutE">
    <location>
        <begin position="1"/>
        <end position="196"/>
    </location>
</feature>
<dbReference type="EC" id="1.1.1.298"/>
<dbReference type="EMBL" id="U00096">
    <property type="protein sequence ID" value="AAC74093.1"/>
    <property type="molecule type" value="Genomic_DNA"/>
</dbReference>
<dbReference type="EMBL" id="AP009048">
    <property type="protein sequence ID" value="BAA35775.1"/>
    <property type="molecule type" value="Genomic_DNA"/>
</dbReference>
<dbReference type="PIR" id="F64842">
    <property type="entry name" value="F64842"/>
</dbReference>
<dbReference type="RefSeq" id="NP_415528.1">
    <property type="nucleotide sequence ID" value="NC_000913.3"/>
</dbReference>
<dbReference type="RefSeq" id="WP_001001176.1">
    <property type="nucleotide sequence ID" value="NZ_SSZK01000002.1"/>
</dbReference>
<dbReference type="SMR" id="P75894"/>
<dbReference type="FunCoup" id="P75894">
    <property type="interactions" value="94"/>
</dbReference>
<dbReference type="STRING" id="511145.b1008"/>
<dbReference type="PaxDb" id="511145-b1008"/>
<dbReference type="EnsemblBacteria" id="AAC74093">
    <property type="protein sequence ID" value="AAC74093"/>
    <property type="gene ID" value="b1008"/>
</dbReference>
<dbReference type="GeneID" id="946591"/>
<dbReference type="KEGG" id="ecj:JW0993"/>
<dbReference type="KEGG" id="eco:b1008"/>
<dbReference type="KEGG" id="ecoc:C3026_06135"/>
<dbReference type="PATRIC" id="fig|1411691.4.peg.1263"/>
<dbReference type="EchoBASE" id="EB3615"/>
<dbReference type="eggNOG" id="COG0778">
    <property type="taxonomic scope" value="Bacteria"/>
</dbReference>
<dbReference type="HOGENOM" id="CLU_084441_0_0_6"/>
<dbReference type="InParanoid" id="P75894"/>
<dbReference type="OMA" id="LMVVNIG"/>
<dbReference type="OrthoDB" id="9784375at2"/>
<dbReference type="PhylomeDB" id="P75894"/>
<dbReference type="BioCyc" id="EcoCyc:G6519-MONOMER"/>
<dbReference type="BioCyc" id="MetaCyc:G6519-MONOMER"/>
<dbReference type="PRO" id="PR:P75894"/>
<dbReference type="Proteomes" id="UP000000625">
    <property type="component" value="Chromosome"/>
</dbReference>
<dbReference type="GO" id="GO:0035527">
    <property type="term" value="F:3-hydroxypropionate dehydrogenase (NADP+) activity"/>
    <property type="evidence" value="ECO:0000269"/>
    <property type="project" value="EcoCyc"/>
</dbReference>
<dbReference type="GO" id="GO:0010181">
    <property type="term" value="F:FMN binding"/>
    <property type="evidence" value="ECO:0000314"/>
    <property type="project" value="EcoCyc"/>
</dbReference>
<dbReference type="GO" id="GO:0006974">
    <property type="term" value="P:DNA damage response"/>
    <property type="evidence" value="ECO:0000270"/>
    <property type="project" value="EcoliWiki"/>
</dbReference>
<dbReference type="GO" id="GO:0019740">
    <property type="term" value="P:nitrogen utilization"/>
    <property type="evidence" value="ECO:0000314"/>
    <property type="project" value="UniProtKB"/>
</dbReference>
<dbReference type="GO" id="GO:0006208">
    <property type="term" value="P:pyrimidine nucleobase catabolic process"/>
    <property type="evidence" value="ECO:0000315"/>
    <property type="project" value="EcoCyc"/>
</dbReference>
<dbReference type="GO" id="GO:0006212">
    <property type="term" value="P:uracil catabolic process"/>
    <property type="evidence" value="ECO:0000314"/>
    <property type="project" value="UniProtKB"/>
</dbReference>
<dbReference type="CDD" id="cd02148">
    <property type="entry name" value="RutE-like"/>
    <property type="match status" value="1"/>
</dbReference>
<dbReference type="FunFam" id="3.40.109.10:FF:000003">
    <property type="entry name" value="Probable malonic semialdehyde reductase RutE"/>
    <property type="match status" value="1"/>
</dbReference>
<dbReference type="Gene3D" id="3.40.109.10">
    <property type="entry name" value="NADH Oxidase"/>
    <property type="match status" value="1"/>
</dbReference>
<dbReference type="HAMAP" id="MF_01204">
    <property type="entry name" value="Oxidoreductase_RutE_HadB"/>
    <property type="match status" value="1"/>
</dbReference>
<dbReference type="InterPro" id="IPR029479">
    <property type="entry name" value="Nitroreductase"/>
</dbReference>
<dbReference type="InterPro" id="IPR000415">
    <property type="entry name" value="Nitroreductase-like"/>
</dbReference>
<dbReference type="InterPro" id="IPR050461">
    <property type="entry name" value="Nitroreductase_HadB/RutE"/>
</dbReference>
<dbReference type="InterPro" id="IPR023936">
    <property type="entry name" value="RutE-like"/>
</dbReference>
<dbReference type="NCBIfam" id="NF003768">
    <property type="entry name" value="PRK05365.1"/>
    <property type="match status" value="1"/>
</dbReference>
<dbReference type="PANTHER" id="PTHR43543">
    <property type="entry name" value="MALONIC SEMIALDEHYDE REDUCTASE RUTE-RELATED"/>
    <property type="match status" value="1"/>
</dbReference>
<dbReference type="PANTHER" id="PTHR43543:SF1">
    <property type="entry name" value="MALONIC SEMIALDEHYDE REDUCTASE RUTE-RELATED"/>
    <property type="match status" value="1"/>
</dbReference>
<dbReference type="Pfam" id="PF00881">
    <property type="entry name" value="Nitroreductase"/>
    <property type="match status" value="1"/>
</dbReference>
<dbReference type="SUPFAM" id="SSF55469">
    <property type="entry name" value="FMN-dependent nitroreductase-like"/>
    <property type="match status" value="1"/>
</dbReference>
<accession>P75894</accession>
<comment type="function">
    <text evidence="2">May reduce toxic product malonic semialdehyde to 3-hydroxypropionic acid, which is excreted. RutE is apparently supplemented by YdfG. Required in vivo, but not in vitro in pyrimidine nitrogen degradation.</text>
</comment>
<comment type="catalytic activity">
    <reaction>
        <text>3-hydroxypropanoate + NADP(+) = 3-oxopropanoate + NADPH + H(+)</text>
        <dbReference type="Rhea" id="RHEA:26438"/>
        <dbReference type="ChEBI" id="CHEBI:15378"/>
        <dbReference type="ChEBI" id="CHEBI:16510"/>
        <dbReference type="ChEBI" id="CHEBI:33190"/>
        <dbReference type="ChEBI" id="CHEBI:57783"/>
        <dbReference type="ChEBI" id="CHEBI:58349"/>
        <dbReference type="EC" id="1.1.1.298"/>
    </reaction>
</comment>
<comment type="cofactor">
    <cofactor evidence="5">
        <name>FMN</name>
        <dbReference type="ChEBI" id="CHEBI:58210"/>
    </cofactor>
</comment>
<comment type="induction">
    <text evidence="1 3">Up-regulated by the nitrogen regulatory protein C (NtrC also called GlnG) and repressed by RutR.</text>
</comment>
<comment type="disruption phenotype">
    <text evidence="2 4">Cells lacking this gene lose the ability to utilize pyrimidine nucleosides and bases as the sole source of nitrogen at room temperature.</text>
</comment>
<comment type="miscellaneous">
    <text>The Rut pathway degrades exogenous pyrimidines as the sole nitrogen source at room temperature but not at 37 degrees Celsius, a restriction that is apparently a consequence of an inadequate ability to remove toxic malonic semialdehyde at the higher temperature (RutE/YdfG function).</text>
</comment>
<comment type="similarity">
    <text evidence="5">Belongs to the nitroreductase family. HadB/RutE subfamily.</text>
</comment>
<organism>
    <name type="scientific">Escherichia coli (strain K12)</name>
    <dbReference type="NCBI Taxonomy" id="83333"/>
    <lineage>
        <taxon>Bacteria</taxon>
        <taxon>Pseudomonadati</taxon>
        <taxon>Pseudomonadota</taxon>
        <taxon>Gammaproteobacteria</taxon>
        <taxon>Enterobacterales</taxon>
        <taxon>Enterobacteriaceae</taxon>
        <taxon>Escherichia</taxon>
    </lineage>
</organism>
<name>RUTE_ECOLI</name>
<gene>
    <name type="primary">rutE</name>
    <name type="synonym">ycdI</name>
    <name type="ordered locus">b1008</name>
    <name type="ordered locus">JW0993</name>
</gene>